<keyword id="KW-0972">Capsule biogenesis/degradation</keyword>
<keyword id="KW-0548">Nucleotidyltransferase</keyword>
<keyword id="KW-1185">Reference proteome</keyword>
<keyword id="KW-0808">Transferase</keyword>
<protein>
    <recommendedName>
        <fullName evidence="4 5">CTP:phosphoglutamine cytidylyltransferase</fullName>
        <ecNumber evidence="2 3">2.7.7.103</ecNumber>
    </recommendedName>
</protein>
<accession>Q0P8J8</accession>
<comment type="function">
    <text evidence="1 2 3">Involved in the biosynthesis of the O-methyl phosphoramidate (MeOPN) group found on the capsular polysaccharide (CPS) of C.jejuni (PubMed:17675288). Catalyzes the formation of CDP-L-glutamine from CTP and L-glutamine phosphate (PubMed:29023101, PubMed:30929435). In the presence of MnCTP, catalyzes the displacement of pyrophosphate from CTP using phosphoramidate, methyl phosphate, methyl phosphonate, phosphate, arsenate, ethanolamine phosphate, (R/S)-glycerol-1-phosphate, glycerol-2-phosphate, serinol phosphate, L-serine phosphate and 3-phospho-D-glycerate as substrate in addition to L-glutamine phosphate (PubMed:30929435).</text>
</comment>
<comment type="catalytic activity">
    <reaction evidence="2 3">
        <text>N(5)-phospho-L-glutamine + CTP + H(+) = N(5)-(cytidine 5'-diphosphoramidyl)-L-glutamine + diphosphate</text>
        <dbReference type="Rhea" id="RHEA:57308"/>
        <dbReference type="ChEBI" id="CHEBI:15378"/>
        <dbReference type="ChEBI" id="CHEBI:33019"/>
        <dbReference type="ChEBI" id="CHEBI:37563"/>
        <dbReference type="ChEBI" id="CHEBI:139073"/>
        <dbReference type="ChEBI" id="CHEBI:141583"/>
        <dbReference type="EC" id="2.7.7.103"/>
    </reaction>
</comment>
<comment type="biophysicochemical properties">
    <kinetics>
        <KM evidence="2">120 uM for L-glutamine phosphate</KM>
        <KM evidence="2">170 uM for MgCTP</KM>
        <text evidence="2 3">kcat is 57 min(-1) with L-glutamine phosphate as substrate (in the presence of MgCTP) (PubMed:29023101). kcat is 0.35 min(-1) with L-glutamine phosphate as substrate (in the presence of MnCTP). kcat is 0.6 min(-1) with phosphoramidate as substrate (in the presence of MnCTP). kcat is 3.7 min(-1) with 3-phospho-D-glycerate as substrate (in the presence of MnCTP). kcat is 0.18 min(-1) with phosphate as substrate (in the presence of MnCTP). kcat is 0.07 min(-1) with methyl phosphate as substrate (in the presence of MnCTP). kcat is 0.15 min(-1) with methyl phosphonate as substrate (in the presence of MnCTP). kcat is 0.18 min(-1) with arsenate as substrate (in the presence of MnCTP). kcat is 0.017 min(-1) with ethanolamine phosphate as substrate (in the presence of MnCTP). kcat is 0.07 min(-1) with (R/S)-glycerol-1-phosphate as substrate (in the presence of MnCTP). kcat is 0.08 min(-1) with glycerol-2-phosphate as substrate (in the presence of MnCTP). kcat is 0.017 min(-1) with serinol phosphate as substrate (in the presence of MnCTP). kcat is 0.18 min(-1) with L-serine phosphate as substrate (in the presence of MnCTP) (PubMed:30929435).</text>
    </kinetics>
</comment>
<comment type="pathway">
    <text evidence="1">Capsule biogenesis; capsule polysaccharide biosynthesis.</text>
</comment>
<comment type="disruption phenotype">
    <text evidence="1">Mutant does not express the MeOPN CPS modification.</text>
</comment>
<comment type="biotechnology">
    <text evidence="3">This enzyme is able to catalyze reactions that produce natural compounds CDP-ethanolamine, CDP-1-glycerol and CDP-2-glycerol, two of which are not available commercially. It can also produce CDP-serine, CDP-serinol and CDP-3-D-glycerate which may be potential inhibitors or mechanistic probes for enzymes that use CDP-glycerol. The labeled nucleotides, such as beta-[(18)O4]-CDP, generated with this enzyme can be used to probe the details of enzyme-catalyzed reactions using positional isotope exchange (PIX) and molecular isotope exchange (MIX) techniques.</text>
</comment>
<proteinExistence type="evidence at protein level"/>
<feature type="chain" id="PRO_0000445429" description="CTP:phosphoglutamine cytidylyltransferase">
    <location>
        <begin position="1"/>
        <end position="253"/>
    </location>
</feature>
<dbReference type="EC" id="2.7.7.103" evidence="2 3"/>
<dbReference type="EMBL" id="AL111168">
    <property type="protein sequence ID" value="CAL35525.1"/>
    <property type="molecule type" value="Genomic_DNA"/>
</dbReference>
<dbReference type="PIR" id="H81286">
    <property type="entry name" value="H81286"/>
</dbReference>
<dbReference type="RefSeq" id="WP_002858404.1">
    <property type="nucleotide sequence ID" value="NZ_SZUC01000003.1"/>
</dbReference>
<dbReference type="RefSeq" id="YP_002344799.1">
    <property type="nucleotide sequence ID" value="NC_002163.1"/>
</dbReference>
<dbReference type="SMR" id="Q0P8J8"/>
<dbReference type="IntAct" id="Q0P8J8">
    <property type="interactions" value="14"/>
</dbReference>
<dbReference type="STRING" id="192222.Cj1416c"/>
<dbReference type="PaxDb" id="192222-Cj1416c"/>
<dbReference type="DNASU" id="905705"/>
<dbReference type="EnsemblBacteria" id="CAL35525">
    <property type="protein sequence ID" value="CAL35525"/>
    <property type="gene ID" value="Cj1416c"/>
</dbReference>
<dbReference type="GeneID" id="905705"/>
<dbReference type="KEGG" id="cje:Cj1416c"/>
<dbReference type="PATRIC" id="fig|192222.6.peg.1397"/>
<dbReference type="eggNOG" id="COG1213">
    <property type="taxonomic scope" value="Bacteria"/>
</dbReference>
<dbReference type="HOGENOM" id="CLU_029499_5_1_7"/>
<dbReference type="OrthoDB" id="9788272at2"/>
<dbReference type="BRENDA" id="2.7.7.103">
    <property type="organism ID" value="13746"/>
</dbReference>
<dbReference type="SABIO-RK" id="Q0P8J8"/>
<dbReference type="STRENDA-DB" id="EQY80Y">
    <property type="experiment" value="Kinetic constants for Cj1416 from Campylobacter jejuni NCTC 11168"/>
</dbReference>
<dbReference type="UniPathway" id="UPA00934"/>
<dbReference type="Proteomes" id="UP000000799">
    <property type="component" value="Chromosome"/>
</dbReference>
<dbReference type="GO" id="GO:0070567">
    <property type="term" value="F:cytidylyltransferase activity"/>
    <property type="evidence" value="ECO:0000314"/>
    <property type="project" value="UniProtKB"/>
</dbReference>
<dbReference type="GO" id="GO:0045227">
    <property type="term" value="P:capsule polysaccharide biosynthetic process"/>
    <property type="evidence" value="ECO:0000314"/>
    <property type="project" value="UniProtKB"/>
</dbReference>
<dbReference type="CDD" id="cd02523">
    <property type="entry name" value="PC_cytidylyltransferase"/>
    <property type="match status" value="1"/>
</dbReference>
<dbReference type="Gene3D" id="3.90.550.10">
    <property type="entry name" value="Spore Coat Polysaccharide Biosynthesis Protein SpsA, Chain A"/>
    <property type="match status" value="1"/>
</dbReference>
<dbReference type="InterPro" id="IPR050065">
    <property type="entry name" value="GlmU-like"/>
</dbReference>
<dbReference type="InterPro" id="IPR005835">
    <property type="entry name" value="NTP_transferase_dom"/>
</dbReference>
<dbReference type="InterPro" id="IPR029044">
    <property type="entry name" value="Nucleotide-diphossugar_trans"/>
</dbReference>
<dbReference type="PANTHER" id="PTHR43584:SF8">
    <property type="entry name" value="N-ACETYLMURAMATE ALPHA-1-PHOSPHATE URIDYLYLTRANSFERASE"/>
    <property type="match status" value="1"/>
</dbReference>
<dbReference type="PANTHER" id="PTHR43584">
    <property type="entry name" value="NUCLEOTIDYL TRANSFERASE"/>
    <property type="match status" value="1"/>
</dbReference>
<dbReference type="Pfam" id="PF00483">
    <property type="entry name" value="NTP_transferase"/>
    <property type="match status" value="1"/>
</dbReference>
<dbReference type="SUPFAM" id="SSF53448">
    <property type="entry name" value="Nucleotide-diphospho-sugar transferases"/>
    <property type="match status" value="1"/>
</dbReference>
<evidence type="ECO:0000269" key="1">
    <source>
    </source>
</evidence>
<evidence type="ECO:0000269" key="2">
    <source>
    </source>
</evidence>
<evidence type="ECO:0000269" key="3">
    <source>
    </source>
</evidence>
<evidence type="ECO:0000303" key="4">
    <source>
    </source>
</evidence>
<evidence type="ECO:0000303" key="5">
    <source>
    </source>
</evidence>
<evidence type="ECO:0000312" key="6">
    <source>
        <dbReference type="EMBL" id="CAL35525.1"/>
    </source>
</evidence>
<sequence length="253" mass="29533">MNAIILAAGFGSRLMPLTKDQPKCMVEYKNKKIIDYEIEALKSAGINEIAVVGGYLNDVLKNYLNKYDIEHFFINSKYDKTNMVHTFFCAKDFMLKCIEEKQDLIISYADIVYFQDCVQKLINAKEELAIVVDKSWCKLWSKRFANPLEDAETLKMTNGYIIELGKKANAYDEIEAQYIGLFKFSYQFLSEVIAFYEMLDRDILYDNKNFENMYMTSFLQALIEKYNNAKAVEIDGNWCEIDFMSDLEVQIEK</sequence>
<reference key="1">
    <citation type="journal article" date="2000" name="Nature">
        <title>The genome sequence of the food-borne pathogen Campylobacter jejuni reveals hypervariable sequences.</title>
        <authorList>
            <person name="Parkhill J."/>
            <person name="Wren B.W."/>
            <person name="Mungall K.L."/>
            <person name="Ketley J.M."/>
            <person name="Churcher C.M."/>
            <person name="Basham D."/>
            <person name="Chillingworth T."/>
            <person name="Davies R.M."/>
            <person name="Feltwell T."/>
            <person name="Holroyd S."/>
            <person name="Jagels K."/>
            <person name="Karlyshev A.V."/>
            <person name="Moule S."/>
            <person name="Pallen M.J."/>
            <person name="Penn C.W."/>
            <person name="Quail M.A."/>
            <person name="Rajandream M.A."/>
            <person name="Rutherford K.M."/>
            <person name="van Vliet A.H.M."/>
            <person name="Whitehead S."/>
            <person name="Barrell B.G."/>
        </authorList>
    </citation>
    <scope>NUCLEOTIDE SEQUENCE [LARGE SCALE GENOMIC DNA]</scope>
    <source>
        <strain>ATCC 700819 / NCTC 11168</strain>
    </source>
</reference>
<reference key="2">
    <citation type="journal article" date="2007" name="J. Biol. Chem.">
        <title>Commonality and biosynthesis of the O-methyl phosphoramidate capsule modification in Campylobacter jejuni.</title>
        <authorList>
            <person name="McNally D.J."/>
            <person name="Lamoureux M.P."/>
            <person name="Karlyshev A.V."/>
            <person name="Fiori L.M."/>
            <person name="Li J."/>
            <person name="Thacker G."/>
            <person name="Coleman R.A."/>
            <person name="Khieu N.H."/>
            <person name="Wren B.W."/>
            <person name="Brisson J.R."/>
            <person name="Jarrell H.C."/>
            <person name="Szymanski C.M."/>
        </authorList>
    </citation>
    <scope>FUNCTION IN CAPSULE BIOSYNTHESIS</scope>
    <scope>PATHWAY</scope>
    <scope>DISRUPTION PHENOTYPE</scope>
    <source>
        <strain>ATCC 700819 / NCTC 11168</strain>
    </source>
</reference>
<reference key="3">
    <citation type="journal article" date="2017" name="Biochemistry">
        <title>Biosynthesis of nucleoside diphosphoramidates in Campylobacter jejuni.</title>
        <authorList>
            <person name="Taylor Z.W."/>
            <person name="Brown H.A."/>
            <person name="Holden H.M."/>
            <person name="Raushel F.M."/>
        </authorList>
    </citation>
    <scope>FUNCTION</scope>
    <scope>CATALYTIC ACTIVITY</scope>
    <scope>BIOPHYSICOCHEMICAL PROPERTIES</scope>
    <source>
        <strain>ATCC 700819 / NCTC 11168</strain>
    </source>
</reference>
<reference key="4">
    <citation type="journal article" date="2019" name="Biochemistry">
        <title>Manganese-Induced Substrate Promiscuity in the Reaction Catalyzed by Phosphoglutamine Cytidylyltransferase from Campylobacter jejuni.</title>
        <authorList>
            <person name="Taylor Z.W."/>
            <person name="Raushel F.M."/>
        </authorList>
    </citation>
    <scope>FUNCTION</scope>
    <scope>CATALYTIC ACTIVITY</scope>
    <scope>SUBSTRATE SPECIFICITY</scope>
    <scope>BIOPHYSICOCHEMICAL PROPERTIES</scope>
    <scope>BIOTECHNOLOGY</scope>
    <source>
        <strain evidence="5">ATCC 700819 / NCTC 11168</strain>
    </source>
</reference>
<organism>
    <name type="scientific">Campylobacter jejuni subsp. jejuni serotype O:2 (strain ATCC 700819 / NCTC 11168)</name>
    <dbReference type="NCBI Taxonomy" id="192222"/>
    <lineage>
        <taxon>Bacteria</taxon>
        <taxon>Pseudomonadati</taxon>
        <taxon>Campylobacterota</taxon>
        <taxon>Epsilonproteobacteria</taxon>
        <taxon>Campylobacterales</taxon>
        <taxon>Campylobacteraceae</taxon>
        <taxon>Campylobacter</taxon>
    </lineage>
</organism>
<name>CTDTR_CAMJE</name>
<gene>
    <name evidence="6" type="ordered locus">Cj1416c</name>
</gene>